<proteinExistence type="evidence at transcript level"/>
<protein>
    <recommendedName>
        <fullName evidence="1">Large ribosomal subunit protein eL21</fullName>
    </recommendedName>
    <alternativeName>
        <fullName>60S ribosomal protein L21</fullName>
    </alternativeName>
</protein>
<organism>
    <name type="scientific">Cyanophora paradoxa</name>
    <dbReference type="NCBI Taxonomy" id="2762"/>
    <lineage>
        <taxon>Eukaryota</taxon>
        <taxon>Glaucocystophyceae</taxon>
        <taxon>Cyanophoraceae</taxon>
        <taxon>Cyanophora</taxon>
    </lineage>
</organism>
<gene>
    <name type="primary">RPL21</name>
</gene>
<reference key="1">
    <citation type="submission" date="1998-09" db="EMBL/GenBank/DDBJ databases">
        <authorList>
            <person name="Hink C."/>
            <person name="Loeffelhardt W."/>
        </authorList>
    </citation>
    <scope>NUCLEOTIDE SEQUENCE [MRNA]</scope>
    <source>
        <strain>UTEX LB 555 / Pringsheim</strain>
    </source>
</reference>
<feature type="chain" id="PRO_0000149678" description="Large ribosomal subunit protein eL21">
    <location>
        <begin position="1"/>
        <end position="161"/>
    </location>
</feature>
<accession>O82574</accession>
<name>RL21_CYAPA</name>
<sequence length="161" mass="18380">MPHSYGYRARTRALFARAFKTNGPVHLSTYLTNFKIGEYVDVVGNAAVHKGMPFKYYHGRTGIVWNVTKRAIGVEINKRVRHRIIKKRIHVRIDHVKKSSCRDSFLKRVKENDKIKHDAHVAKLPVPSTKRLPVLPKAGAIIKSKGQVPETCHAIPYEHLV</sequence>
<keyword id="KW-0687">Ribonucleoprotein</keyword>
<keyword id="KW-0689">Ribosomal protein</keyword>
<dbReference type="EMBL" id="AF092950">
    <property type="protein sequence ID" value="AAC64142.1"/>
    <property type="molecule type" value="mRNA"/>
</dbReference>
<dbReference type="SMR" id="O82574"/>
<dbReference type="GO" id="GO:1990904">
    <property type="term" value="C:ribonucleoprotein complex"/>
    <property type="evidence" value="ECO:0007669"/>
    <property type="project" value="UniProtKB-KW"/>
</dbReference>
<dbReference type="GO" id="GO:0005840">
    <property type="term" value="C:ribosome"/>
    <property type="evidence" value="ECO:0007669"/>
    <property type="project" value="UniProtKB-KW"/>
</dbReference>
<dbReference type="GO" id="GO:0003735">
    <property type="term" value="F:structural constituent of ribosome"/>
    <property type="evidence" value="ECO:0007669"/>
    <property type="project" value="InterPro"/>
</dbReference>
<dbReference type="GO" id="GO:0006412">
    <property type="term" value="P:translation"/>
    <property type="evidence" value="ECO:0007669"/>
    <property type="project" value="InterPro"/>
</dbReference>
<dbReference type="FunFam" id="2.30.30.70:FF:000001">
    <property type="entry name" value="60S ribosomal protein L21"/>
    <property type="match status" value="1"/>
</dbReference>
<dbReference type="Gene3D" id="6.10.250.3260">
    <property type="match status" value="1"/>
</dbReference>
<dbReference type="Gene3D" id="2.30.30.70">
    <property type="entry name" value="Ribosomal protein L21"/>
    <property type="match status" value="1"/>
</dbReference>
<dbReference type="InterPro" id="IPR001147">
    <property type="entry name" value="Ribosomal_eL21"/>
</dbReference>
<dbReference type="InterPro" id="IPR018259">
    <property type="entry name" value="Ribosomal_eL21_CS"/>
</dbReference>
<dbReference type="InterPro" id="IPR036948">
    <property type="entry name" value="Ribosomal_eL21_sf"/>
</dbReference>
<dbReference type="InterPro" id="IPR008991">
    <property type="entry name" value="Translation_prot_SH3-like_sf"/>
</dbReference>
<dbReference type="PANTHER" id="PTHR20981">
    <property type="entry name" value="60S RIBOSOMAL PROTEIN L21"/>
    <property type="match status" value="1"/>
</dbReference>
<dbReference type="Pfam" id="PF01157">
    <property type="entry name" value="Ribosomal_L21e"/>
    <property type="match status" value="1"/>
</dbReference>
<dbReference type="SUPFAM" id="SSF50104">
    <property type="entry name" value="Translation proteins SH3-like domain"/>
    <property type="match status" value="1"/>
</dbReference>
<dbReference type="PROSITE" id="PS01171">
    <property type="entry name" value="RIBOSOMAL_L21E"/>
    <property type="match status" value="1"/>
</dbReference>
<evidence type="ECO:0000305" key="1"/>
<comment type="similarity">
    <text evidence="1">Belongs to the eukaryotic ribosomal protein eL21 family.</text>
</comment>